<gene>
    <name evidence="1" type="primary">nuoH</name>
    <name type="ordered locus">LEPBI_I1302</name>
</gene>
<evidence type="ECO:0000255" key="1">
    <source>
        <dbReference type="HAMAP-Rule" id="MF_01350"/>
    </source>
</evidence>
<dbReference type="EC" id="7.1.1.-" evidence="1"/>
<dbReference type="EMBL" id="CP000786">
    <property type="protein sequence ID" value="ABZ97412.1"/>
    <property type="molecule type" value="Genomic_DNA"/>
</dbReference>
<dbReference type="RefSeq" id="WP_012388293.1">
    <property type="nucleotide sequence ID" value="NC_010602.1"/>
</dbReference>
<dbReference type="SMR" id="B0SP88"/>
<dbReference type="STRING" id="456481.LEPBI_I1302"/>
<dbReference type="KEGG" id="lbi:LEPBI_I1302"/>
<dbReference type="HOGENOM" id="CLU_015134_0_1_12"/>
<dbReference type="OrthoDB" id="9803734at2"/>
<dbReference type="BioCyc" id="LBIF456481:LEPBI_RS06375-MONOMER"/>
<dbReference type="Proteomes" id="UP000001847">
    <property type="component" value="Chromosome I"/>
</dbReference>
<dbReference type="GO" id="GO:0005886">
    <property type="term" value="C:plasma membrane"/>
    <property type="evidence" value="ECO:0007669"/>
    <property type="project" value="UniProtKB-SubCell"/>
</dbReference>
<dbReference type="GO" id="GO:0003954">
    <property type="term" value="F:NADH dehydrogenase activity"/>
    <property type="evidence" value="ECO:0007669"/>
    <property type="project" value="TreeGrafter"/>
</dbReference>
<dbReference type="GO" id="GO:0016655">
    <property type="term" value="F:oxidoreductase activity, acting on NAD(P)H, quinone or similar compound as acceptor"/>
    <property type="evidence" value="ECO:0007669"/>
    <property type="project" value="UniProtKB-UniRule"/>
</dbReference>
<dbReference type="GO" id="GO:0048038">
    <property type="term" value="F:quinone binding"/>
    <property type="evidence" value="ECO:0007669"/>
    <property type="project" value="UniProtKB-KW"/>
</dbReference>
<dbReference type="GO" id="GO:0009060">
    <property type="term" value="P:aerobic respiration"/>
    <property type="evidence" value="ECO:0007669"/>
    <property type="project" value="TreeGrafter"/>
</dbReference>
<dbReference type="HAMAP" id="MF_01350">
    <property type="entry name" value="NDH1_NuoH"/>
    <property type="match status" value="1"/>
</dbReference>
<dbReference type="InterPro" id="IPR001694">
    <property type="entry name" value="NADH_UbQ_OxRdtase_su1/FPO"/>
</dbReference>
<dbReference type="InterPro" id="IPR018086">
    <property type="entry name" value="NADH_UbQ_OxRdtase_su1_CS"/>
</dbReference>
<dbReference type="NCBIfam" id="NF004741">
    <property type="entry name" value="PRK06076.1-2"/>
    <property type="match status" value="1"/>
</dbReference>
<dbReference type="PANTHER" id="PTHR11432">
    <property type="entry name" value="NADH DEHYDROGENASE SUBUNIT 1"/>
    <property type="match status" value="1"/>
</dbReference>
<dbReference type="PANTHER" id="PTHR11432:SF3">
    <property type="entry name" value="NADH-UBIQUINONE OXIDOREDUCTASE CHAIN 1"/>
    <property type="match status" value="1"/>
</dbReference>
<dbReference type="Pfam" id="PF00146">
    <property type="entry name" value="NADHdh"/>
    <property type="match status" value="1"/>
</dbReference>
<dbReference type="PROSITE" id="PS00668">
    <property type="entry name" value="COMPLEX1_ND1_2"/>
    <property type="match status" value="1"/>
</dbReference>
<feature type="chain" id="PRO_1000143606" description="NADH-quinone oxidoreductase subunit H">
    <location>
        <begin position="1"/>
        <end position="356"/>
    </location>
</feature>
<feature type="transmembrane region" description="Helical" evidence="1">
    <location>
        <begin position="4"/>
        <end position="24"/>
    </location>
</feature>
<feature type="transmembrane region" description="Helical" evidence="1">
    <location>
        <begin position="79"/>
        <end position="99"/>
    </location>
</feature>
<feature type="transmembrane region" description="Helical" evidence="1">
    <location>
        <begin position="127"/>
        <end position="147"/>
    </location>
</feature>
<feature type="transmembrane region" description="Helical" evidence="1">
    <location>
        <begin position="166"/>
        <end position="186"/>
    </location>
</feature>
<feature type="transmembrane region" description="Helical" evidence="1">
    <location>
        <begin position="198"/>
        <end position="218"/>
    </location>
</feature>
<feature type="transmembrane region" description="Helical" evidence="1">
    <location>
        <begin position="251"/>
        <end position="271"/>
    </location>
</feature>
<feature type="transmembrane region" description="Helical" evidence="1">
    <location>
        <begin position="289"/>
        <end position="309"/>
    </location>
</feature>
<feature type="transmembrane region" description="Helical" evidence="1">
    <location>
        <begin position="329"/>
        <end position="349"/>
    </location>
</feature>
<sequence>MDWALILAWGIKILSLFFVILTGVAYYTLAERKFAGFIQDRPGPNRAGPFGIFQPLADGIKFIAKEEIFPKNVSKGMYLLAPTISMTCAIMAWAVIPFGGTLPAPEWLTTLTGVATIDLQIANPDSGVLYMLAISSLSVYGIMIAGWSSNNKYSLLGGVRSTAQMISYELPMGLSIVAIVIMTGSLKLTDISDSQKDMWNILSPPGFVAFFIYVTAMFAETNRLPFDLAEAESELVVGFHTEYGAFKFALFFLAEYMNMITMSCLTTLLFFGGYNVPFQLGAGSEYQAFIGLGFFILKVLFFAFLFIWVRWTLPRFRYDQLMKLGWKKMIPWGLFVVMFASIYTVYWKEGWMKLFI</sequence>
<keyword id="KW-0997">Cell inner membrane</keyword>
<keyword id="KW-1003">Cell membrane</keyword>
<keyword id="KW-0472">Membrane</keyword>
<keyword id="KW-0520">NAD</keyword>
<keyword id="KW-0874">Quinone</keyword>
<keyword id="KW-1185">Reference proteome</keyword>
<keyword id="KW-1278">Translocase</keyword>
<keyword id="KW-0812">Transmembrane</keyword>
<keyword id="KW-1133">Transmembrane helix</keyword>
<keyword id="KW-0830">Ubiquinone</keyword>
<accession>B0SP88</accession>
<protein>
    <recommendedName>
        <fullName evidence="1">NADH-quinone oxidoreductase subunit H</fullName>
        <ecNumber evidence="1">7.1.1.-</ecNumber>
    </recommendedName>
    <alternativeName>
        <fullName evidence="1">NADH dehydrogenase I subunit H</fullName>
    </alternativeName>
    <alternativeName>
        <fullName evidence="1">NDH-1 subunit H</fullName>
    </alternativeName>
</protein>
<proteinExistence type="inferred from homology"/>
<organism>
    <name type="scientific">Leptospira biflexa serovar Patoc (strain Patoc 1 / ATCC 23582 / Paris)</name>
    <dbReference type="NCBI Taxonomy" id="456481"/>
    <lineage>
        <taxon>Bacteria</taxon>
        <taxon>Pseudomonadati</taxon>
        <taxon>Spirochaetota</taxon>
        <taxon>Spirochaetia</taxon>
        <taxon>Leptospirales</taxon>
        <taxon>Leptospiraceae</taxon>
        <taxon>Leptospira</taxon>
    </lineage>
</organism>
<name>NUOH_LEPBP</name>
<comment type="function">
    <text evidence="1">NDH-1 shuttles electrons from NADH, via FMN and iron-sulfur (Fe-S) centers, to quinones in the respiratory chain. The immediate electron acceptor for the enzyme in this species is believed to be ubiquinone. Couples the redox reaction to proton translocation (for every two electrons transferred, four hydrogen ions are translocated across the cytoplasmic membrane), and thus conserves the redox energy in a proton gradient. This subunit may bind ubiquinone.</text>
</comment>
<comment type="catalytic activity">
    <reaction evidence="1">
        <text>a quinone + NADH + 5 H(+)(in) = a quinol + NAD(+) + 4 H(+)(out)</text>
        <dbReference type="Rhea" id="RHEA:57888"/>
        <dbReference type="ChEBI" id="CHEBI:15378"/>
        <dbReference type="ChEBI" id="CHEBI:24646"/>
        <dbReference type="ChEBI" id="CHEBI:57540"/>
        <dbReference type="ChEBI" id="CHEBI:57945"/>
        <dbReference type="ChEBI" id="CHEBI:132124"/>
    </reaction>
</comment>
<comment type="subunit">
    <text evidence="1">NDH-1 is composed of 14 different subunits. Subunits NuoA, H, J, K, L, M, N constitute the membrane sector of the complex.</text>
</comment>
<comment type="subcellular location">
    <subcellularLocation>
        <location evidence="1">Cell inner membrane</location>
        <topology evidence="1">Multi-pass membrane protein</topology>
    </subcellularLocation>
</comment>
<comment type="similarity">
    <text evidence="1">Belongs to the complex I subunit 1 family.</text>
</comment>
<reference key="1">
    <citation type="journal article" date="2008" name="PLoS ONE">
        <title>Genome sequence of the saprophyte Leptospira biflexa provides insights into the evolution of Leptospira and the pathogenesis of leptospirosis.</title>
        <authorList>
            <person name="Picardeau M."/>
            <person name="Bulach D.M."/>
            <person name="Bouchier C."/>
            <person name="Zuerner R.L."/>
            <person name="Zidane N."/>
            <person name="Wilson P.J."/>
            <person name="Creno S."/>
            <person name="Kuczek E.S."/>
            <person name="Bommezzadri S."/>
            <person name="Davis J.C."/>
            <person name="McGrath A."/>
            <person name="Johnson M.J."/>
            <person name="Boursaux-Eude C."/>
            <person name="Seemann T."/>
            <person name="Rouy Z."/>
            <person name="Coppel R.L."/>
            <person name="Rood J.I."/>
            <person name="Lajus A."/>
            <person name="Davies J.K."/>
            <person name="Medigue C."/>
            <person name="Adler B."/>
        </authorList>
    </citation>
    <scope>NUCLEOTIDE SEQUENCE [LARGE SCALE GENOMIC DNA]</scope>
    <source>
        <strain>Patoc 1 / ATCC 23582 / Paris</strain>
    </source>
</reference>